<dbReference type="EC" id="2.3.2.6" evidence="1"/>
<dbReference type="EMBL" id="BA000031">
    <property type="protein sequence ID" value="BAC59281.1"/>
    <property type="molecule type" value="Genomic_DNA"/>
</dbReference>
<dbReference type="RefSeq" id="NP_797397.1">
    <property type="nucleotide sequence ID" value="NC_004603.1"/>
</dbReference>
<dbReference type="RefSeq" id="WP_005457250.1">
    <property type="nucleotide sequence ID" value="NC_004603.1"/>
</dbReference>
<dbReference type="SMR" id="Q87QY1"/>
<dbReference type="GeneID" id="1188522"/>
<dbReference type="KEGG" id="vpa:VP1018"/>
<dbReference type="PATRIC" id="fig|223926.6.peg.965"/>
<dbReference type="eggNOG" id="COG2360">
    <property type="taxonomic scope" value="Bacteria"/>
</dbReference>
<dbReference type="HOGENOM" id="CLU_075045_0_0_6"/>
<dbReference type="Proteomes" id="UP000002493">
    <property type="component" value="Chromosome 1"/>
</dbReference>
<dbReference type="GO" id="GO:0005737">
    <property type="term" value="C:cytoplasm"/>
    <property type="evidence" value="ECO:0007669"/>
    <property type="project" value="UniProtKB-SubCell"/>
</dbReference>
<dbReference type="GO" id="GO:0008914">
    <property type="term" value="F:leucyl-tRNA--protein transferase activity"/>
    <property type="evidence" value="ECO:0007669"/>
    <property type="project" value="UniProtKB-UniRule"/>
</dbReference>
<dbReference type="GO" id="GO:0030163">
    <property type="term" value="P:protein catabolic process"/>
    <property type="evidence" value="ECO:0007669"/>
    <property type="project" value="UniProtKB-UniRule"/>
</dbReference>
<dbReference type="FunFam" id="3.30.70.3550:FF:000001">
    <property type="entry name" value="Leucyl/phenylalanyl-tRNA--protein transferase"/>
    <property type="match status" value="1"/>
</dbReference>
<dbReference type="FunFam" id="3.40.630.70:FF:000001">
    <property type="entry name" value="Leucyl/phenylalanyl-tRNA--protein transferase"/>
    <property type="match status" value="1"/>
</dbReference>
<dbReference type="Gene3D" id="3.40.630.70">
    <property type="entry name" value="Leucyl/phenylalanyl-tRNA-protein transferase, C-terminal domain"/>
    <property type="match status" value="1"/>
</dbReference>
<dbReference type="Gene3D" id="3.30.70.3550">
    <property type="entry name" value="Leucyl/phenylalanyl-tRNA-protein transferase, N-terminal domain"/>
    <property type="match status" value="1"/>
</dbReference>
<dbReference type="HAMAP" id="MF_00688">
    <property type="entry name" value="Leu_Phe_trans"/>
    <property type="match status" value="1"/>
</dbReference>
<dbReference type="InterPro" id="IPR016181">
    <property type="entry name" value="Acyl_CoA_acyltransferase"/>
</dbReference>
<dbReference type="InterPro" id="IPR004616">
    <property type="entry name" value="Leu/Phe-tRNA_Trfase"/>
</dbReference>
<dbReference type="InterPro" id="IPR042203">
    <property type="entry name" value="Leu/Phe-tRNA_Trfase_C"/>
</dbReference>
<dbReference type="InterPro" id="IPR042221">
    <property type="entry name" value="Leu/Phe-tRNA_Trfase_N"/>
</dbReference>
<dbReference type="NCBIfam" id="TIGR00667">
    <property type="entry name" value="aat"/>
    <property type="match status" value="1"/>
</dbReference>
<dbReference type="PANTHER" id="PTHR30098">
    <property type="entry name" value="LEUCYL/PHENYLALANYL-TRNA--PROTEIN TRANSFERASE"/>
    <property type="match status" value="1"/>
</dbReference>
<dbReference type="PANTHER" id="PTHR30098:SF2">
    <property type="entry name" value="LEUCYL_PHENYLALANYL-TRNA--PROTEIN TRANSFERASE"/>
    <property type="match status" value="1"/>
</dbReference>
<dbReference type="Pfam" id="PF03588">
    <property type="entry name" value="Leu_Phe_trans"/>
    <property type="match status" value="1"/>
</dbReference>
<dbReference type="SUPFAM" id="SSF55729">
    <property type="entry name" value="Acyl-CoA N-acyltransferases (Nat)"/>
    <property type="match status" value="1"/>
</dbReference>
<evidence type="ECO:0000255" key="1">
    <source>
        <dbReference type="HAMAP-Rule" id="MF_00688"/>
    </source>
</evidence>
<sequence>MAIYLTELDSTFNFPSPYEALSDPNGLLAFGGDLDPHRILSGYYQGIFPWYGPGEPILWWSPSPRAVFDPLTFKPSKSLKKFQRKHQYKVTINQATEHVIQLCSSTRPADETWLNEEMQAAYIQLSNLGHCHSVEVWHDNTLVGGLYGISVGQLFCGESMFSLKDNASKIALWYLCTHLASKHGQLIDCQVMNPHLASLGAFELDRDEFIQKLLSLREKQTASDTFTPQVLQDSES</sequence>
<organism>
    <name type="scientific">Vibrio parahaemolyticus serotype O3:K6 (strain RIMD 2210633)</name>
    <dbReference type="NCBI Taxonomy" id="223926"/>
    <lineage>
        <taxon>Bacteria</taxon>
        <taxon>Pseudomonadati</taxon>
        <taxon>Pseudomonadota</taxon>
        <taxon>Gammaproteobacteria</taxon>
        <taxon>Vibrionales</taxon>
        <taxon>Vibrionaceae</taxon>
        <taxon>Vibrio</taxon>
    </lineage>
</organism>
<reference key="1">
    <citation type="journal article" date="2003" name="Lancet">
        <title>Genome sequence of Vibrio parahaemolyticus: a pathogenic mechanism distinct from that of V. cholerae.</title>
        <authorList>
            <person name="Makino K."/>
            <person name="Oshima K."/>
            <person name="Kurokawa K."/>
            <person name="Yokoyama K."/>
            <person name="Uda T."/>
            <person name="Tagomori K."/>
            <person name="Iijima Y."/>
            <person name="Najima M."/>
            <person name="Nakano M."/>
            <person name="Yamashita A."/>
            <person name="Kubota Y."/>
            <person name="Kimura S."/>
            <person name="Yasunaga T."/>
            <person name="Honda T."/>
            <person name="Shinagawa H."/>
            <person name="Hattori M."/>
            <person name="Iida T."/>
        </authorList>
    </citation>
    <scope>NUCLEOTIDE SEQUENCE [LARGE SCALE GENOMIC DNA]</scope>
    <source>
        <strain>RIMD 2210633</strain>
    </source>
</reference>
<accession>Q87QY1</accession>
<name>LFTR_VIBPA</name>
<protein>
    <recommendedName>
        <fullName evidence="1">Leucyl/phenylalanyl-tRNA--protein transferase</fullName>
        <ecNumber evidence="1">2.3.2.6</ecNumber>
    </recommendedName>
    <alternativeName>
        <fullName evidence="1">L/F-transferase</fullName>
    </alternativeName>
    <alternativeName>
        <fullName evidence="1">Leucyltransferase</fullName>
    </alternativeName>
    <alternativeName>
        <fullName evidence="1">Phenyalanyltransferase</fullName>
    </alternativeName>
</protein>
<comment type="function">
    <text evidence="1">Functions in the N-end rule pathway of protein degradation where it conjugates Leu, Phe and, less efficiently, Met from aminoacyl-tRNAs to the N-termini of proteins containing an N-terminal arginine or lysine.</text>
</comment>
<comment type="catalytic activity">
    <reaction evidence="1">
        <text>N-terminal L-lysyl-[protein] + L-leucyl-tRNA(Leu) = N-terminal L-leucyl-L-lysyl-[protein] + tRNA(Leu) + H(+)</text>
        <dbReference type="Rhea" id="RHEA:12340"/>
        <dbReference type="Rhea" id="RHEA-COMP:9613"/>
        <dbReference type="Rhea" id="RHEA-COMP:9622"/>
        <dbReference type="Rhea" id="RHEA-COMP:12670"/>
        <dbReference type="Rhea" id="RHEA-COMP:12671"/>
        <dbReference type="ChEBI" id="CHEBI:15378"/>
        <dbReference type="ChEBI" id="CHEBI:65249"/>
        <dbReference type="ChEBI" id="CHEBI:78442"/>
        <dbReference type="ChEBI" id="CHEBI:78494"/>
        <dbReference type="ChEBI" id="CHEBI:133043"/>
        <dbReference type="EC" id="2.3.2.6"/>
    </reaction>
</comment>
<comment type="catalytic activity">
    <reaction evidence="1">
        <text>N-terminal L-arginyl-[protein] + L-leucyl-tRNA(Leu) = N-terminal L-leucyl-L-arginyl-[protein] + tRNA(Leu) + H(+)</text>
        <dbReference type="Rhea" id="RHEA:50416"/>
        <dbReference type="Rhea" id="RHEA-COMP:9613"/>
        <dbReference type="Rhea" id="RHEA-COMP:9622"/>
        <dbReference type="Rhea" id="RHEA-COMP:12672"/>
        <dbReference type="Rhea" id="RHEA-COMP:12673"/>
        <dbReference type="ChEBI" id="CHEBI:15378"/>
        <dbReference type="ChEBI" id="CHEBI:64719"/>
        <dbReference type="ChEBI" id="CHEBI:78442"/>
        <dbReference type="ChEBI" id="CHEBI:78494"/>
        <dbReference type="ChEBI" id="CHEBI:133044"/>
        <dbReference type="EC" id="2.3.2.6"/>
    </reaction>
</comment>
<comment type="catalytic activity">
    <reaction evidence="1">
        <text>L-phenylalanyl-tRNA(Phe) + an N-terminal L-alpha-aminoacyl-[protein] = an N-terminal L-phenylalanyl-L-alpha-aminoacyl-[protein] + tRNA(Phe)</text>
        <dbReference type="Rhea" id="RHEA:43632"/>
        <dbReference type="Rhea" id="RHEA-COMP:9668"/>
        <dbReference type="Rhea" id="RHEA-COMP:9699"/>
        <dbReference type="Rhea" id="RHEA-COMP:10636"/>
        <dbReference type="Rhea" id="RHEA-COMP:10637"/>
        <dbReference type="ChEBI" id="CHEBI:78442"/>
        <dbReference type="ChEBI" id="CHEBI:78531"/>
        <dbReference type="ChEBI" id="CHEBI:78597"/>
        <dbReference type="ChEBI" id="CHEBI:83561"/>
        <dbReference type="EC" id="2.3.2.6"/>
    </reaction>
</comment>
<comment type="subcellular location">
    <subcellularLocation>
        <location evidence="1">Cytoplasm</location>
    </subcellularLocation>
</comment>
<comment type="similarity">
    <text evidence="1">Belongs to the L/F-transferase family.</text>
</comment>
<keyword id="KW-0012">Acyltransferase</keyword>
<keyword id="KW-0963">Cytoplasm</keyword>
<keyword id="KW-0808">Transferase</keyword>
<proteinExistence type="inferred from homology"/>
<feature type="chain" id="PRO_0000207248" description="Leucyl/phenylalanyl-tRNA--protein transferase">
    <location>
        <begin position="1"/>
        <end position="236"/>
    </location>
</feature>
<gene>
    <name evidence="1" type="primary">aat</name>
    <name type="ordered locus">VP1018</name>
</gene>